<dbReference type="EC" id="2.4.2.9" evidence="1"/>
<dbReference type="EMBL" id="AE017308">
    <property type="protein sequence ID" value="AAT28024.1"/>
    <property type="molecule type" value="Genomic_DNA"/>
</dbReference>
<dbReference type="RefSeq" id="WP_011265058.1">
    <property type="nucleotide sequence ID" value="NC_006908.1"/>
</dbReference>
<dbReference type="SMR" id="Q6KHA6"/>
<dbReference type="STRING" id="267748.MMOB5380"/>
<dbReference type="KEGG" id="mmo:MMOB5380"/>
<dbReference type="eggNOG" id="COG0035">
    <property type="taxonomic scope" value="Bacteria"/>
</dbReference>
<dbReference type="HOGENOM" id="CLU_067096_2_2_14"/>
<dbReference type="OrthoDB" id="9781675at2"/>
<dbReference type="UniPathway" id="UPA00574">
    <property type="reaction ID" value="UER00636"/>
</dbReference>
<dbReference type="Proteomes" id="UP000009072">
    <property type="component" value="Chromosome"/>
</dbReference>
<dbReference type="GO" id="GO:0005525">
    <property type="term" value="F:GTP binding"/>
    <property type="evidence" value="ECO:0007669"/>
    <property type="project" value="UniProtKB-KW"/>
</dbReference>
<dbReference type="GO" id="GO:0000287">
    <property type="term" value="F:magnesium ion binding"/>
    <property type="evidence" value="ECO:0007669"/>
    <property type="project" value="UniProtKB-UniRule"/>
</dbReference>
<dbReference type="GO" id="GO:0004845">
    <property type="term" value="F:uracil phosphoribosyltransferase activity"/>
    <property type="evidence" value="ECO:0007669"/>
    <property type="project" value="UniProtKB-UniRule"/>
</dbReference>
<dbReference type="GO" id="GO:0044206">
    <property type="term" value="P:UMP salvage"/>
    <property type="evidence" value="ECO:0007669"/>
    <property type="project" value="UniProtKB-UniRule"/>
</dbReference>
<dbReference type="GO" id="GO:0006223">
    <property type="term" value="P:uracil salvage"/>
    <property type="evidence" value="ECO:0007669"/>
    <property type="project" value="InterPro"/>
</dbReference>
<dbReference type="CDD" id="cd06223">
    <property type="entry name" value="PRTases_typeI"/>
    <property type="match status" value="1"/>
</dbReference>
<dbReference type="FunFam" id="3.40.50.2020:FF:000003">
    <property type="entry name" value="Uracil phosphoribosyltransferase"/>
    <property type="match status" value="1"/>
</dbReference>
<dbReference type="Gene3D" id="3.40.50.2020">
    <property type="match status" value="1"/>
</dbReference>
<dbReference type="HAMAP" id="MF_01218_B">
    <property type="entry name" value="Upp_B"/>
    <property type="match status" value="1"/>
</dbReference>
<dbReference type="InterPro" id="IPR000836">
    <property type="entry name" value="PRibTrfase_dom"/>
</dbReference>
<dbReference type="InterPro" id="IPR029057">
    <property type="entry name" value="PRTase-like"/>
</dbReference>
<dbReference type="InterPro" id="IPR034332">
    <property type="entry name" value="Upp_B"/>
</dbReference>
<dbReference type="InterPro" id="IPR050054">
    <property type="entry name" value="UPRTase/APRTase"/>
</dbReference>
<dbReference type="InterPro" id="IPR005765">
    <property type="entry name" value="Ura_phspho_trans"/>
</dbReference>
<dbReference type="NCBIfam" id="NF001097">
    <property type="entry name" value="PRK00129.1"/>
    <property type="match status" value="1"/>
</dbReference>
<dbReference type="NCBIfam" id="TIGR01091">
    <property type="entry name" value="upp"/>
    <property type="match status" value="1"/>
</dbReference>
<dbReference type="PANTHER" id="PTHR32315">
    <property type="entry name" value="ADENINE PHOSPHORIBOSYLTRANSFERASE"/>
    <property type="match status" value="1"/>
</dbReference>
<dbReference type="PANTHER" id="PTHR32315:SF4">
    <property type="entry name" value="URACIL PHOSPHORIBOSYLTRANSFERASE, CHLOROPLASTIC"/>
    <property type="match status" value="1"/>
</dbReference>
<dbReference type="Pfam" id="PF14681">
    <property type="entry name" value="UPRTase"/>
    <property type="match status" value="1"/>
</dbReference>
<dbReference type="SUPFAM" id="SSF53271">
    <property type="entry name" value="PRTase-like"/>
    <property type="match status" value="1"/>
</dbReference>
<sequence>MIHIINHPLIEIKLTVMRDEKTNHKDFKANLNEISSLMVYEILRDYKAKDFQVKTSTGSLANGKIFDKEIVIVPILRAGLGMTDGISNLVPQARIGHIGLYRDEKTFEAKEYFYKIPDVKKDSLILVVDPMLATGGSANDAIKSLKKRGFSNIKLVCLVGVKDGIDLIEKNHPDVNVYLAAKDDHLDKNKYIIPGLGDAGDRIFGTK</sequence>
<reference key="1">
    <citation type="journal article" date="2004" name="Genome Res.">
        <title>The complete genome and proteome of Mycoplasma mobile.</title>
        <authorList>
            <person name="Jaffe J.D."/>
            <person name="Stange-Thomann N."/>
            <person name="Smith C."/>
            <person name="DeCaprio D."/>
            <person name="Fisher S."/>
            <person name="Butler J."/>
            <person name="Calvo S."/>
            <person name="Elkins T."/>
            <person name="FitzGerald M.G."/>
            <person name="Hafez N."/>
            <person name="Kodira C.D."/>
            <person name="Major J."/>
            <person name="Wang S."/>
            <person name="Wilkinson J."/>
            <person name="Nicol R."/>
            <person name="Nusbaum C."/>
            <person name="Birren B."/>
            <person name="Berg H.C."/>
            <person name="Church G.M."/>
        </authorList>
    </citation>
    <scope>NUCLEOTIDE SEQUENCE [LARGE SCALE GENOMIC DNA]</scope>
    <source>
        <strain>ATCC 43663 / NCTC 11711 / 163 K</strain>
    </source>
</reference>
<organism>
    <name type="scientific">Mycoplasma mobile (strain ATCC 43663 / 163K / NCTC 11711)</name>
    <name type="common">Mesomycoplasma mobile</name>
    <dbReference type="NCBI Taxonomy" id="267748"/>
    <lineage>
        <taxon>Bacteria</taxon>
        <taxon>Bacillati</taxon>
        <taxon>Mycoplasmatota</taxon>
        <taxon>Mycoplasmoidales</taxon>
        <taxon>Metamycoplasmataceae</taxon>
        <taxon>Mesomycoplasma</taxon>
    </lineage>
</organism>
<feature type="chain" id="PRO_0000120852" description="Uracil phosphoribosyltransferase">
    <location>
        <begin position="1"/>
        <end position="207"/>
    </location>
</feature>
<feature type="binding site" evidence="1">
    <location>
        <position position="77"/>
    </location>
    <ligand>
        <name>5-phospho-alpha-D-ribose 1-diphosphate</name>
        <dbReference type="ChEBI" id="CHEBI:58017"/>
    </ligand>
</feature>
<feature type="binding site" evidence="1">
    <location>
        <position position="102"/>
    </location>
    <ligand>
        <name>5-phospho-alpha-D-ribose 1-diphosphate</name>
        <dbReference type="ChEBI" id="CHEBI:58017"/>
    </ligand>
</feature>
<feature type="binding site" evidence="1">
    <location>
        <begin position="129"/>
        <end position="137"/>
    </location>
    <ligand>
        <name>5-phospho-alpha-D-ribose 1-diphosphate</name>
        <dbReference type="ChEBI" id="CHEBI:58017"/>
    </ligand>
</feature>
<feature type="binding site" evidence="1">
    <location>
        <position position="192"/>
    </location>
    <ligand>
        <name>uracil</name>
        <dbReference type="ChEBI" id="CHEBI:17568"/>
    </ligand>
</feature>
<feature type="binding site" evidence="1">
    <location>
        <begin position="197"/>
        <end position="199"/>
    </location>
    <ligand>
        <name>uracil</name>
        <dbReference type="ChEBI" id="CHEBI:17568"/>
    </ligand>
</feature>
<feature type="binding site" evidence="1">
    <location>
        <position position="198"/>
    </location>
    <ligand>
        <name>5-phospho-alpha-D-ribose 1-diphosphate</name>
        <dbReference type="ChEBI" id="CHEBI:58017"/>
    </ligand>
</feature>
<name>UPP_MYCM1</name>
<protein>
    <recommendedName>
        <fullName evidence="1">Uracil phosphoribosyltransferase</fullName>
        <ecNumber evidence="1">2.4.2.9</ecNumber>
    </recommendedName>
    <alternativeName>
        <fullName evidence="1">UMP pyrophosphorylase</fullName>
    </alternativeName>
    <alternativeName>
        <fullName evidence="1">UPRTase</fullName>
    </alternativeName>
</protein>
<accession>Q6KHA6</accession>
<comment type="function">
    <text evidence="1">Catalyzes the conversion of uracil and 5-phospho-alpha-D-ribose 1-diphosphate (PRPP) to UMP and diphosphate.</text>
</comment>
<comment type="catalytic activity">
    <reaction evidence="1">
        <text>UMP + diphosphate = 5-phospho-alpha-D-ribose 1-diphosphate + uracil</text>
        <dbReference type="Rhea" id="RHEA:13017"/>
        <dbReference type="ChEBI" id="CHEBI:17568"/>
        <dbReference type="ChEBI" id="CHEBI:33019"/>
        <dbReference type="ChEBI" id="CHEBI:57865"/>
        <dbReference type="ChEBI" id="CHEBI:58017"/>
        <dbReference type="EC" id="2.4.2.9"/>
    </reaction>
</comment>
<comment type="cofactor">
    <cofactor evidence="1">
        <name>Mg(2+)</name>
        <dbReference type="ChEBI" id="CHEBI:18420"/>
    </cofactor>
    <text evidence="1">Binds 1 Mg(2+) ion per subunit. The magnesium is bound as Mg-PRPP.</text>
</comment>
<comment type="activity regulation">
    <text evidence="1">Allosterically activated by GTP.</text>
</comment>
<comment type="pathway">
    <text evidence="1">Pyrimidine metabolism; UMP biosynthesis via salvage pathway; UMP from uracil: step 1/1.</text>
</comment>
<comment type="similarity">
    <text evidence="1">Belongs to the UPRTase family.</text>
</comment>
<evidence type="ECO:0000255" key="1">
    <source>
        <dbReference type="HAMAP-Rule" id="MF_01218"/>
    </source>
</evidence>
<keyword id="KW-0021">Allosteric enzyme</keyword>
<keyword id="KW-0328">Glycosyltransferase</keyword>
<keyword id="KW-0342">GTP-binding</keyword>
<keyword id="KW-0460">Magnesium</keyword>
<keyword id="KW-0547">Nucleotide-binding</keyword>
<keyword id="KW-1185">Reference proteome</keyword>
<keyword id="KW-0808">Transferase</keyword>
<proteinExistence type="inferred from homology"/>
<gene>
    <name evidence="1" type="primary">upp</name>
    <name type="ordered locus">MMOB5380</name>
</gene>